<proteinExistence type="inferred from homology"/>
<feature type="signal peptide" description="Tat-type signal" evidence="1">
    <location>
        <begin position="1"/>
        <end position="32"/>
    </location>
</feature>
<feature type="chain" id="PRO_0000045992" description="Periplasmic nitrate reductase" evidence="1">
    <location>
        <begin position="33"/>
        <end position="828"/>
    </location>
</feature>
<feature type="domain" description="4Fe-4S Mo/W bis-MGD-type" evidence="1">
    <location>
        <begin position="38"/>
        <end position="94"/>
    </location>
</feature>
<feature type="binding site" evidence="1">
    <location>
        <position position="45"/>
    </location>
    <ligand>
        <name>[4Fe-4S] cluster</name>
        <dbReference type="ChEBI" id="CHEBI:49883"/>
    </ligand>
</feature>
<feature type="binding site" evidence="1">
    <location>
        <position position="48"/>
    </location>
    <ligand>
        <name>[4Fe-4S] cluster</name>
        <dbReference type="ChEBI" id="CHEBI:49883"/>
    </ligand>
</feature>
<feature type="binding site" evidence="1">
    <location>
        <position position="52"/>
    </location>
    <ligand>
        <name>[4Fe-4S] cluster</name>
        <dbReference type="ChEBI" id="CHEBI:49883"/>
    </ligand>
</feature>
<feature type="binding site" evidence="1">
    <location>
        <position position="80"/>
    </location>
    <ligand>
        <name>[4Fe-4S] cluster</name>
        <dbReference type="ChEBI" id="CHEBI:49883"/>
    </ligand>
</feature>
<feature type="binding site" evidence="1">
    <location>
        <position position="82"/>
    </location>
    <ligand>
        <name>Mo-bis(molybdopterin guanine dinucleotide)</name>
        <dbReference type="ChEBI" id="CHEBI:60539"/>
    </ligand>
</feature>
<feature type="binding site" evidence="1">
    <location>
        <position position="149"/>
    </location>
    <ligand>
        <name>Mo-bis(molybdopterin guanine dinucleotide)</name>
        <dbReference type="ChEBI" id="CHEBI:60539"/>
    </ligand>
</feature>
<feature type="binding site" evidence="1">
    <location>
        <position position="174"/>
    </location>
    <ligand>
        <name>Mo-bis(molybdopterin guanine dinucleotide)</name>
        <dbReference type="ChEBI" id="CHEBI:60539"/>
    </ligand>
</feature>
<feature type="binding site" evidence="1">
    <location>
        <position position="178"/>
    </location>
    <ligand>
        <name>Mo-bis(molybdopterin guanine dinucleotide)</name>
        <dbReference type="ChEBI" id="CHEBI:60539"/>
    </ligand>
</feature>
<feature type="binding site" evidence="1">
    <location>
        <begin position="211"/>
        <end position="218"/>
    </location>
    <ligand>
        <name>Mo-bis(molybdopterin guanine dinucleotide)</name>
        <dbReference type="ChEBI" id="CHEBI:60539"/>
    </ligand>
</feature>
<feature type="binding site" evidence="1">
    <location>
        <begin position="242"/>
        <end position="246"/>
    </location>
    <ligand>
        <name>Mo-bis(molybdopterin guanine dinucleotide)</name>
        <dbReference type="ChEBI" id="CHEBI:60539"/>
    </ligand>
</feature>
<feature type="binding site" evidence="1">
    <location>
        <begin position="261"/>
        <end position="263"/>
    </location>
    <ligand>
        <name>Mo-bis(molybdopterin guanine dinucleotide)</name>
        <dbReference type="ChEBI" id="CHEBI:60539"/>
    </ligand>
</feature>
<feature type="binding site" evidence="1">
    <location>
        <position position="372"/>
    </location>
    <ligand>
        <name>Mo-bis(molybdopterin guanine dinucleotide)</name>
        <dbReference type="ChEBI" id="CHEBI:60539"/>
    </ligand>
</feature>
<feature type="binding site" evidence="1">
    <location>
        <position position="376"/>
    </location>
    <ligand>
        <name>Mo-bis(molybdopterin guanine dinucleotide)</name>
        <dbReference type="ChEBI" id="CHEBI:60539"/>
    </ligand>
</feature>
<feature type="binding site" evidence="1">
    <location>
        <position position="482"/>
    </location>
    <ligand>
        <name>Mo-bis(molybdopterin guanine dinucleotide)</name>
        <dbReference type="ChEBI" id="CHEBI:60539"/>
    </ligand>
</feature>
<feature type="binding site" evidence="1">
    <location>
        <begin position="508"/>
        <end position="509"/>
    </location>
    <ligand>
        <name>Mo-bis(molybdopterin guanine dinucleotide)</name>
        <dbReference type="ChEBI" id="CHEBI:60539"/>
    </ligand>
</feature>
<feature type="binding site" evidence="1">
    <location>
        <position position="531"/>
    </location>
    <ligand>
        <name>Mo-bis(molybdopterin guanine dinucleotide)</name>
        <dbReference type="ChEBI" id="CHEBI:60539"/>
    </ligand>
</feature>
<feature type="binding site" evidence="1">
    <location>
        <position position="558"/>
    </location>
    <ligand>
        <name>Mo-bis(molybdopterin guanine dinucleotide)</name>
        <dbReference type="ChEBI" id="CHEBI:60539"/>
    </ligand>
</feature>
<feature type="binding site" evidence="1">
    <location>
        <begin position="718"/>
        <end position="727"/>
    </location>
    <ligand>
        <name>Mo-bis(molybdopterin guanine dinucleotide)</name>
        <dbReference type="ChEBI" id="CHEBI:60539"/>
    </ligand>
</feature>
<feature type="binding site" evidence="1">
    <location>
        <position position="794"/>
    </location>
    <ligand>
        <name>substrate</name>
    </ligand>
</feature>
<feature type="binding site" evidence="1">
    <location>
        <position position="802"/>
    </location>
    <ligand>
        <name>Mo-bis(molybdopterin guanine dinucleotide)</name>
        <dbReference type="ChEBI" id="CHEBI:60539"/>
    </ligand>
</feature>
<feature type="binding site" evidence="1">
    <location>
        <position position="819"/>
    </location>
    <ligand>
        <name>Mo-bis(molybdopterin guanine dinucleotide)</name>
        <dbReference type="ChEBI" id="CHEBI:60539"/>
    </ligand>
</feature>
<keyword id="KW-0004">4Fe-4S</keyword>
<keyword id="KW-0249">Electron transport</keyword>
<keyword id="KW-0408">Iron</keyword>
<keyword id="KW-0411">Iron-sulfur</keyword>
<keyword id="KW-0479">Metal-binding</keyword>
<keyword id="KW-0500">Molybdenum</keyword>
<keyword id="KW-0534">Nitrate assimilation</keyword>
<keyword id="KW-0560">Oxidoreductase</keyword>
<keyword id="KW-0574">Periplasm</keyword>
<keyword id="KW-1185">Reference proteome</keyword>
<keyword id="KW-0732">Signal</keyword>
<keyword id="KW-0813">Transport</keyword>
<organism>
    <name type="scientific">Pasteurella multocida (strain Pm70)</name>
    <dbReference type="NCBI Taxonomy" id="272843"/>
    <lineage>
        <taxon>Bacteria</taxon>
        <taxon>Pseudomonadati</taxon>
        <taxon>Pseudomonadota</taxon>
        <taxon>Gammaproteobacteria</taxon>
        <taxon>Pasteurellales</taxon>
        <taxon>Pasteurellaceae</taxon>
        <taxon>Pasteurella</taxon>
    </lineage>
</organism>
<reference key="1">
    <citation type="journal article" date="2001" name="Proc. Natl. Acad. Sci. U.S.A.">
        <title>Complete genomic sequence of Pasteurella multocida Pm70.</title>
        <authorList>
            <person name="May B.J."/>
            <person name="Zhang Q."/>
            <person name="Li L.L."/>
            <person name="Paustian M.L."/>
            <person name="Whittam T.S."/>
            <person name="Kapur V."/>
        </authorList>
    </citation>
    <scope>NUCLEOTIDE SEQUENCE [LARGE SCALE GENOMIC DNA]</scope>
    <source>
        <strain>Pm70</strain>
    </source>
</reference>
<protein>
    <recommendedName>
        <fullName evidence="1">Periplasmic nitrate reductase</fullName>
        <ecNumber evidence="1">1.9.6.1</ecNumber>
    </recommendedName>
</protein>
<dbReference type="EC" id="1.9.6.1" evidence="1"/>
<dbReference type="EMBL" id="AE004439">
    <property type="protein sequence ID" value="AAK03678.1"/>
    <property type="molecule type" value="Genomic_DNA"/>
</dbReference>
<dbReference type="RefSeq" id="WP_005724436.1">
    <property type="nucleotide sequence ID" value="NC_002663.1"/>
</dbReference>
<dbReference type="SMR" id="Q9CKL8"/>
<dbReference type="STRING" id="272843.PM1594"/>
<dbReference type="EnsemblBacteria" id="AAK03678">
    <property type="protein sequence ID" value="AAK03678"/>
    <property type="gene ID" value="PM1594"/>
</dbReference>
<dbReference type="GeneID" id="77206841"/>
<dbReference type="KEGG" id="pmu:PM1594"/>
<dbReference type="HOGENOM" id="CLU_000422_13_4_6"/>
<dbReference type="OrthoDB" id="9816402at2"/>
<dbReference type="Proteomes" id="UP000000809">
    <property type="component" value="Chromosome"/>
</dbReference>
<dbReference type="GO" id="GO:0016020">
    <property type="term" value="C:membrane"/>
    <property type="evidence" value="ECO:0007669"/>
    <property type="project" value="TreeGrafter"/>
</dbReference>
<dbReference type="GO" id="GO:0009325">
    <property type="term" value="C:nitrate reductase complex"/>
    <property type="evidence" value="ECO:0007669"/>
    <property type="project" value="TreeGrafter"/>
</dbReference>
<dbReference type="GO" id="GO:0042597">
    <property type="term" value="C:periplasmic space"/>
    <property type="evidence" value="ECO:0007669"/>
    <property type="project" value="UniProtKB-SubCell"/>
</dbReference>
<dbReference type="GO" id="GO:0051539">
    <property type="term" value="F:4 iron, 4 sulfur cluster binding"/>
    <property type="evidence" value="ECO:0007669"/>
    <property type="project" value="UniProtKB-KW"/>
</dbReference>
<dbReference type="GO" id="GO:0009055">
    <property type="term" value="F:electron transfer activity"/>
    <property type="evidence" value="ECO:0007669"/>
    <property type="project" value="UniProtKB-UniRule"/>
</dbReference>
<dbReference type="GO" id="GO:0005506">
    <property type="term" value="F:iron ion binding"/>
    <property type="evidence" value="ECO:0007669"/>
    <property type="project" value="UniProtKB-UniRule"/>
</dbReference>
<dbReference type="GO" id="GO:0030151">
    <property type="term" value="F:molybdenum ion binding"/>
    <property type="evidence" value="ECO:0007669"/>
    <property type="project" value="InterPro"/>
</dbReference>
<dbReference type="GO" id="GO:0043546">
    <property type="term" value="F:molybdopterin cofactor binding"/>
    <property type="evidence" value="ECO:0007669"/>
    <property type="project" value="InterPro"/>
</dbReference>
<dbReference type="GO" id="GO:0050140">
    <property type="term" value="F:nitrate reductase (cytochrome) activity"/>
    <property type="evidence" value="ECO:0007669"/>
    <property type="project" value="UniProtKB-EC"/>
</dbReference>
<dbReference type="GO" id="GO:0045333">
    <property type="term" value="P:cellular respiration"/>
    <property type="evidence" value="ECO:0007669"/>
    <property type="project" value="UniProtKB-ARBA"/>
</dbReference>
<dbReference type="GO" id="GO:0006777">
    <property type="term" value="P:Mo-molybdopterin cofactor biosynthetic process"/>
    <property type="evidence" value="ECO:0007669"/>
    <property type="project" value="UniProtKB-UniRule"/>
</dbReference>
<dbReference type="GO" id="GO:0042128">
    <property type="term" value="P:nitrate assimilation"/>
    <property type="evidence" value="ECO:0007669"/>
    <property type="project" value="UniProtKB-UniRule"/>
</dbReference>
<dbReference type="CDD" id="cd02791">
    <property type="entry name" value="MopB_CT_Nitrate-R-NapA-like"/>
    <property type="match status" value="1"/>
</dbReference>
<dbReference type="CDD" id="cd02754">
    <property type="entry name" value="MopB_Nitrate-R-NapA-like"/>
    <property type="match status" value="1"/>
</dbReference>
<dbReference type="FunFam" id="2.40.40.20:FF:000005">
    <property type="entry name" value="Periplasmic nitrate reductase"/>
    <property type="match status" value="1"/>
</dbReference>
<dbReference type="Gene3D" id="2.40.40.20">
    <property type="match status" value="1"/>
</dbReference>
<dbReference type="Gene3D" id="3.30.200.210">
    <property type="match status" value="1"/>
</dbReference>
<dbReference type="Gene3D" id="3.40.50.740">
    <property type="match status" value="1"/>
</dbReference>
<dbReference type="Gene3D" id="3.40.228.10">
    <property type="entry name" value="Dimethylsulfoxide Reductase, domain 2"/>
    <property type="match status" value="1"/>
</dbReference>
<dbReference type="HAMAP" id="MF_01630">
    <property type="entry name" value="Nitrate_reduct_NapA"/>
    <property type="match status" value="1"/>
</dbReference>
<dbReference type="InterPro" id="IPR009010">
    <property type="entry name" value="Asp_de-COase-like_dom_sf"/>
</dbReference>
<dbReference type="InterPro" id="IPR041957">
    <property type="entry name" value="CT_Nitrate-R-NapA-like"/>
</dbReference>
<dbReference type="InterPro" id="IPR006657">
    <property type="entry name" value="MoPterin_dinucl-bd_dom"/>
</dbReference>
<dbReference type="InterPro" id="IPR006656">
    <property type="entry name" value="Mopterin_OxRdtase"/>
</dbReference>
<dbReference type="InterPro" id="IPR006963">
    <property type="entry name" value="Mopterin_OxRdtase_4Fe-4S_dom"/>
</dbReference>
<dbReference type="InterPro" id="IPR027467">
    <property type="entry name" value="MopterinOxRdtase_cofactor_BS"/>
</dbReference>
<dbReference type="InterPro" id="IPR010051">
    <property type="entry name" value="Periplasm_NO3_reductase_lsu"/>
</dbReference>
<dbReference type="InterPro" id="IPR050123">
    <property type="entry name" value="Prok_molybdopt-oxidoreductase"/>
</dbReference>
<dbReference type="InterPro" id="IPR006311">
    <property type="entry name" value="TAT_signal"/>
</dbReference>
<dbReference type="InterPro" id="IPR019546">
    <property type="entry name" value="TAT_signal_bac_arc"/>
</dbReference>
<dbReference type="NCBIfam" id="TIGR01706">
    <property type="entry name" value="NAPA"/>
    <property type="match status" value="1"/>
</dbReference>
<dbReference type="NCBIfam" id="NF010055">
    <property type="entry name" value="PRK13532.1"/>
    <property type="match status" value="1"/>
</dbReference>
<dbReference type="NCBIfam" id="TIGR01409">
    <property type="entry name" value="TAT_signal_seq"/>
    <property type="match status" value="1"/>
</dbReference>
<dbReference type="PANTHER" id="PTHR43105:SF11">
    <property type="entry name" value="PERIPLASMIC NITRATE REDUCTASE"/>
    <property type="match status" value="1"/>
</dbReference>
<dbReference type="PANTHER" id="PTHR43105">
    <property type="entry name" value="RESPIRATORY NITRATE REDUCTASE"/>
    <property type="match status" value="1"/>
</dbReference>
<dbReference type="Pfam" id="PF04879">
    <property type="entry name" value="Molybdop_Fe4S4"/>
    <property type="match status" value="1"/>
</dbReference>
<dbReference type="Pfam" id="PF00384">
    <property type="entry name" value="Molybdopterin"/>
    <property type="match status" value="1"/>
</dbReference>
<dbReference type="Pfam" id="PF01568">
    <property type="entry name" value="Molydop_binding"/>
    <property type="match status" value="1"/>
</dbReference>
<dbReference type="Pfam" id="PF10518">
    <property type="entry name" value="TAT_signal"/>
    <property type="match status" value="1"/>
</dbReference>
<dbReference type="SMART" id="SM00926">
    <property type="entry name" value="Molybdop_Fe4S4"/>
    <property type="match status" value="1"/>
</dbReference>
<dbReference type="SUPFAM" id="SSF50692">
    <property type="entry name" value="ADC-like"/>
    <property type="match status" value="1"/>
</dbReference>
<dbReference type="SUPFAM" id="SSF53706">
    <property type="entry name" value="Formate dehydrogenase/DMSO reductase, domains 1-3"/>
    <property type="match status" value="1"/>
</dbReference>
<dbReference type="PROSITE" id="PS51669">
    <property type="entry name" value="4FE4S_MOW_BIS_MGD"/>
    <property type="match status" value="1"/>
</dbReference>
<dbReference type="PROSITE" id="PS00551">
    <property type="entry name" value="MOLYBDOPTERIN_PROK_1"/>
    <property type="match status" value="1"/>
</dbReference>
<dbReference type="PROSITE" id="PS51318">
    <property type="entry name" value="TAT"/>
    <property type="match status" value="1"/>
</dbReference>
<gene>
    <name evidence="1" type="primary">napA</name>
    <name type="ordered locus">PM1594</name>
</gene>
<name>NAPA_PASMU</name>
<evidence type="ECO:0000255" key="1">
    <source>
        <dbReference type="HAMAP-Rule" id="MF_01630"/>
    </source>
</evidence>
<accession>Q9CKL8</accession>
<sequence length="828" mass="93356">MNLSRRDFMKTNAAVAAAAVAGLAIPVKNVEASPDKIIKWDKAPCRFCGTGCSVLVGTQNGRVVASQGDPDADVNRGLNCIKGYFLPKIMYGKDRLTSPMLRMTNGKFDKHGEFTPVSWDQAFTIMAEKFKKALKEKGPNGAGMFTSGQSTIFEGIAKSKLFKAGLRSNNIDPNARHCMASAAVAFMRTFGMDEPMGCYDDIEKADAFVLWGSNMAEMHPILWSRISDRRLSHPDVKVAVLSTFEHRSFELADLGVIFTPQSDLAIMNYIANYLIQHDAIDHDFIQKHTKFKRGETDIGYGLRETHELEKAAKNVKTAGKMHDSDFEEYKKLVAPYTLEKAHEISGVPKEQLEALAKMYADPKLNIVSFWTMGFNQHTRGVWANHLIYNIHLLTGKISKPGCGPFSLTGQPSACGTAREVGTFAHRLPADLVVTNPKHVEKAEKLWKLPKGVIQTQVGYHAVAQDRALKDKKMNVLWQMCTNNMQGGPNINQERFPGWRDEENFVIVSDPYPTVSALAADLILPTAMWVEKEGAYGNAERRTQFWYQQVKAPGESKSDVWQLVEFSKYFTTDEMWPAEVLAANPEYKGKTLYEVLFRNGQVDKFQVPTDKPGYMNDEAEHFGFYLQKGLFEEYAVFGRGHGHDLADFETYHKARGLRWPVVDGKETLWRYREGYDPYVKEGEGVAFYGYPDKKAIILAVPYEPPAEAPNAEYDLWLTTGRVLEHWHTGTMTRRVPELHRSFPNNLVWMHPLDAKKRGLRHGDKVKISSRRGEMISHLDTRGRNKVPQGLVYTTFFDAGQLANYLTLDATDPISKETDFKKCAVKVEKA</sequence>
<comment type="function">
    <text evidence="1">Catalytic subunit of the periplasmic nitrate reductase complex NapAB. Receives electrons from NapB and catalyzes the reduction of nitrate to nitrite.</text>
</comment>
<comment type="catalytic activity">
    <reaction evidence="1">
        <text>2 Fe(II)-[cytochrome] + nitrate + 2 H(+) = 2 Fe(III)-[cytochrome] + nitrite + H2O</text>
        <dbReference type="Rhea" id="RHEA:12909"/>
        <dbReference type="Rhea" id="RHEA-COMP:11777"/>
        <dbReference type="Rhea" id="RHEA-COMP:11778"/>
        <dbReference type="ChEBI" id="CHEBI:15377"/>
        <dbReference type="ChEBI" id="CHEBI:15378"/>
        <dbReference type="ChEBI" id="CHEBI:16301"/>
        <dbReference type="ChEBI" id="CHEBI:17632"/>
        <dbReference type="ChEBI" id="CHEBI:29033"/>
        <dbReference type="ChEBI" id="CHEBI:29034"/>
        <dbReference type="EC" id="1.9.6.1"/>
    </reaction>
</comment>
<comment type="cofactor">
    <cofactor evidence="1">
        <name>[4Fe-4S] cluster</name>
        <dbReference type="ChEBI" id="CHEBI:49883"/>
    </cofactor>
    <text evidence="1">Binds 1 [4Fe-4S] cluster.</text>
</comment>
<comment type="cofactor">
    <cofactor evidence="1">
        <name>Mo-bis(molybdopterin guanine dinucleotide)</name>
        <dbReference type="ChEBI" id="CHEBI:60539"/>
    </cofactor>
    <text evidence="1">Binds 1 molybdenum-bis(molybdopterin guanine dinucleotide) (Mo-bis-MGD) cofactor per subunit.</text>
</comment>
<comment type="subunit">
    <text evidence="1">Component of the periplasmic nitrate reductase NapAB complex composed of NapA and NapB.</text>
</comment>
<comment type="subcellular location">
    <subcellularLocation>
        <location evidence="1">Periplasm</location>
    </subcellularLocation>
</comment>
<comment type="PTM">
    <text evidence="1">Predicted to be exported by the Tat system. The position of the signal peptide cleavage has not been experimentally proven.</text>
</comment>
<comment type="similarity">
    <text evidence="1">Belongs to the prokaryotic molybdopterin-containing oxidoreductase family. NasA/NapA/NarB subfamily.</text>
</comment>